<evidence type="ECO:0000269" key="1">
    <source>
    </source>
</evidence>
<accession>P0C2U9</accession>
<organism>
    <name type="scientific">Lycosa singoriensis</name>
    <name type="common">Wolf spider</name>
    <name type="synonym">Aranea singoriensis</name>
    <dbReference type="NCBI Taxonomy" id="434756"/>
    <lineage>
        <taxon>Eukaryota</taxon>
        <taxon>Metazoa</taxon>
        <taxon>Ecdysozoa</taxon>
        <taxon>Arthropoda</taxon>
        <taxon>Chelicerata</taxon>
        <taxon>Arachnida</taxon>
        <taxon>Araneae</taxon>
        <taxon>Araneomorphae</taxon>
        <taxon>Entelegynae</taxon>
        <taxon>Lycosoidea</taxon>
        <taxon>Lycosidae</taxon>
        <taxon>Lycosa</taxon>
    </lineage>
</organism>
<feature type="peptide" id="PRO_0000285259" description="U1-lycotoxin-Ls1a">
    <location>
        <begin position="1"/>
        <end position="19"/>
    </location>
</feature>
<feature type="unsure residue" description="I or L">
    <location>
        <position position="3"/>
    </location>
</feature>
<feature type="unsure residue" description="I or L">
    <location>
        <position position="6"/>
    </location>
</feature>
<feature type="unsure residue" description="I or L">
    <location>
        <position position="10"/>
    </location>
</feature>
<feature type="unsure residue" description="I or L">
    <location>
        <position position="14"/>
    </location>
</feature>
<protein>
    <recommendedName>
        <fullName>U1-lycotoxin-Ls1a</fullName>
        <shortName>U1-LCTX-Ls1a</shortName>
    </recommendedName>
    <alternativeName>
        <fullName>Peptide 2034</fullName>
    </alternativeName>
</protein>
<sequence>AGIGKIGDFIKKAIAKYKN</sequence>
<proteinExistence type="evidence at protein level"/>
<reference key="1">
    <citation type="journal article" date="2004" name="J. Mass Spectrom.">
        <title>De novo sequencing of antimicrobial peptides isolated from the venom glands of the wolf spider Lycosa singoriensis.</title>
        <authorList>
            <person name="Budnik B.A."/>
            <person name="Olsen J.V."/>
            <person name="Egorov T.A."/>
            <person name="Anisimova V.E."/>
            <person name="Galkina T.G."/>
            <person name="Musolyamov A.K."/>
            <person name="Grishin E.V."/>
            <person name="Zubarev R.A."/>
        </authorList>
    </citation>
    <scope>PROTEIN SEQUENCE</scope>
    <scope>MASS SPECTROMETRY</scope>
    <source>
        <tissue>Venom</tissue>
    </source>
</reference>
<comment type="function">
    <text>May inhibit growth of bacteria.</text>
</comment>
<comment type="subcellular location">
    <subcellularLocation>
        <location>Secreted</location>
    </subcellularLocation>
</comment>
<comment type="tissue specificity">
    <text>Expressed by the venom gland.</text>
</comment>
<comment type="mass spectrometry"/>
<keyword id="KW-0044">Antibiotic</keyword>
<keyword id="KW-0929">Antimicrobial</keyword>
<keyword id="KW-0903">Direct protein sequencing</keyword>
<keyword id="KW-0964">Secreted</keyword>
<name>LYC34_LYCSI</name>
<dbReference type="ArachnoServer" id="AS000007">
    <property type="toxin name" value="U1-lycotoxin-Ls1a"/>
</dbReference>
<dbReference type="GO" id="GO:0005576">
    <property type="term" value="C:extracellular region"/>
    <property type="evidence" value="ECO:0007669"/>
    <property type="project" value="UniProtKB-SubCell"/>
</dbReference>
<dbReference type="GO" id="GO:0042742">
    <property type="term" value="P:defense response to bacterium"/>
    <property type="evidence" value="ECO:0007669"/>
    <property type="project" value="UniProtKB-KW"/>
</dbReference>